<proteinExistence type="inferred from homology"/>
<accession>A3DDS7</accession>
<gene>
    <name evidence="1" type="primary">trpC</name>
    <name type="ordered locus">Cthe_0872</name>
</gene>
<feature type="chain" id="PRO_1000018475" description="Indole-3-glycerol phosphate synthase">
    <location>
        <begin position="1"/>
        <end position="260"/>
    </location>
</feature>
<dbReference type="EC" id="4.1.1.48" evidence="1"/>
<dbReference type="EMBL" id="CP000568">
    <property type="protein sequence ID" value="ABN52106.1"/>
    <property type="molecule type" value="Genomic_DNA"/>
</dbReference>
<dbReference type="RefSeq" id="WP_003520913.1">
    <property type="nucleotide sequence ID" value="NC_009012.1"/>
</dbReference>
<dbReference type="SMR" id="A3DDS7"/>
<dbReference type="STRING" id="203119.Cthe_0872"/>
<dbReference type="GeneID" id="35805790"/>
<dbReference type="KEGG" id="cth:Cthe_0872"/>
<dbReference type="eggNOG" id="COG0134">
    <property type="taxonomic scope" value="Bacteria"/>
</dbReference>
<dbReference type="HOGENOM" id="CLU_034247_2_0_9"/>
<dbReference type="OrthoDB" id="9804217at2"/>
<dbReference type="UniPathway" id="UPA00035">
    <property type="reaction ID" value="UER00043"/>
</dbReference>
<dbReference type="Proteomes" id="UP000002145">
    <property type="component" value="Chromosome"/>
</dbReference>
<dbReference type="GO" id="GO:0004425">
    <property type="term" value="F:indole-3-glycerol-phosphate synthase activity"/>
    <property type="evidence" value="ECO:0007669"/>
    <property type="project" value="UniProtKB-UniRule"/>
</dbReference>
<dbReference type="GO" id="GO:0004640">
    <property type="term" value="F:phosphoribosylanthranilate isomerase activity"/>
    <property type="evidence" value="ECO:0007669"/>
    <property type="project" value="TreeGrafter"/>
</dbReference>
<dbReference type="GO" id="GO:0000162">
    <property type="term" value="P:L-tryptophan biosynthetic process"/>
    <property type="evidence" value="ECO:0007669"/>
    <property type="project" value="UniProtKB-UniRule"/>
</dbReference>
<dbReference type="CDD" id="cd00331">
    <property type="entry name" value="IGPS"/>
    <property type="match status" value="1"/>
</dbReference>
<dbReference type="FunFam" id="3.20.20.70:FF:000024">
    <property type="entry name" value="Indole-3-glycerol phosphate synthase"/>
    <property type="match status" value="1"/>
</dbReference>
<dbReference type="Gene3D" id="3.20.20.70">
    <property type="entry name" value="Aldolase class I"/>
    <property type="match status" value="1"/>
</dbReference>
<dbReference type="HAMAP" id="MF_00134_A">
    <property type="entry name" value="IGPS_A"/>
    <property type="match status" value="1"/>
</dbReference>
<dbReference type="HAMAP" id="MF_00134_B">
    <property type="entry name" value="IGPS_B"/>
    <property type="match status" value="1"/>
</dbReference>
<dbReference type="InterPro" id="IPR013785">
    <property type="entry name" value="Aldolase_TIM"/>
</dbReference>
<dbReference type="InterPro" id="IPR045186">
    <property type="entry name" value="Indole-3-glycerol_P_synth"/>
</dbReference>
<dbReference type="InterPro" id="IPR013798">
    <property type="entry name" value="Indole-3-glycerol_P_synth_dom"/>
</dbReference>
<dbReference type="InterPro" id="IPR001468">
    <property type="entry name" value="Indole-3-GlycerolPSynthase_CS"/>
</dbReference>
<dbReference type="InterPro" id="IPR011060">
    <property type="entry name" value="RibuloseP-bd_barrel"/>
</dbReference>
<dbReference type="NCBIfam" id="NF001377">
    <property type="entry name" value="PRK00278.2-4"/>
    <property type="match status" value="1"/>
</dbReference>
<dbReference type="PANTHER" id="PTHR22854:SF2">
    <property type="entry name" value="INDOLE-3-GLYCEROL-PHOSPHATE SYNTHASE"/>
    <property type="match status" value="1"/>
</dbReference>
<dbReference type="PANTHER" id="PTHR22854">
    <property type="entry name" value="TRYPTOPHAN BIOSYNTHESIS PROTEIN"/>
    <property type="match status" value="1"/>
</dbReference>
<dbReference type="Pfam" id="PF00218">
    <property type="entry name" value="IGPS"/>
    <property type="match status" value="1"/>
</dbReference>
<dbReference type="SUPFAM" id="SSF51366">
    <property type="entry name" value="Ribulose-phoshate binding barrel"/>
    <property type="match status" value="1"/>
</dbReference>
<dbReference type="PROSITE" id="PS00614">
    <property type="entry name" value="IGPS"/>
    <property type="match status" value="1"/>
</dbReference>
<organism>
    <name type="scientific">Acetivibrio thermocellus (strain ATCC 27405 / DSM 1237 / JCM 9322 / NBRC 103400 / NCIMB 10682 / NRRL B-4536 / VPI 7372)</name>
    <name type="common">Clostridium thermocellum</name>
    <dbReference type="NCBI Taxonomy" id="203119"/>
    <lineage>
        <taxon>Bacteria</taxon>
        <taxon>Bacillati</taxon>
        <taxon>Bacillota</taxon>
        <taxon>Clostridia</taxon>
        <taxon>Eubacteriales</taxon>
        <taxon>Oscillospiraceae</taxon>
        <taxon>Acetivibrio</taxon>
    </lineage>
</organism>
<sequence>MILDEIVAQKKIQLKKDMSRITIEGWKQKIKRPGIHKPLDFYGALKNNGDISIIAEVKKASPSKGIIKEDFDPLKIAKEYVESDIQAISVLTERNFFKGDEDYLVKIRQFCPLPILRKDFIIDLWQIYESRYIGADAILLIVSLLSDEELKKFQIVANILGMQCLVEVHDERELERALESGARIIGINNRDLRTFEVDLKNTEKLMNRIPNDRVVVSESGIKDTEDLKYLKELGVDAVLIGETFMRARSISEKIREFKAV</sequence>
<evidence type="ECO:0000255" key="1">
    <source>
        <dbReference type="HAMAP-Rule" id="MF_00134"/>
    </source>
</evidence>
<protein>
    <recommendedName>
        <fullName evidence="1">Indole-3-glycerol phosphate synthase</fullName>
        <shortName evidence="1">IGPS</shortName>
        <ecNumber evidence="1">4.1.1.48</ecNumber>
    </recommendedName>
</protein>
<keyword id="KW-0028">Amino-acid biosynthesis</keyword>
<keyword id="KW-0057">Aromatic amino acid biosynthesis</keyword>
<keyword id="KW-0210">Decarboxylase</keyword>
<keyword id="KW-0456">Lyase</keyword>
<keyword id="KW-1185">Reference proteome</keyword>
<keyword id="KW-0822">Tryptophan biosynthesis</keyword>
<reference key="1">
    <citation type="submission" date="2007-02" db="EMBL/GenBank/DDBJ databases">
        <title>Complete sequence of Clostridium thermocellum ATCC 27405.</title>
        <authorList>
            <consortium name="US DOE Joint Genome Institute"/>
            <person name="Copeland A."/>
            <person name="Lucas S."/>
            <person name="Lapidus A."/>
            <person name="Barry K."/>
            <person name="Detter J.C."/>
            <person name="Glavina del Rio T."/>
            <person name="Hammon N."/>
            <person name="Israni S."/>
            <person name="Dalin E."/>
            <person name="Tice H."/>
            <person name="Pitluck S."/>
            <person name="Chertkov O."/>
            <person name="Brettin T."/>
            <person name="Bruce D."/>
            <person name="Han C."/>
            <person name="Tapia R."/>
            <person name="Gilna P."/>
            <person name="Schmutz J."/>
            <person name="Larimer F."/>
            <person name="Land M."/>
            <person name="Hauser L."/>
            <person name="Kyrpides N."/>
            <person name="Mikhailova N."/>
            <person name="Wu J.H.D."/>
            <person name="Newcomb M."/>
            <person name="Richardson P."/>
        </authorList>
    </citation>
    <scope>NUCLEOTIDE SEQUENCE [LARGE SCALE GENOMIC DNA]</scope>
    <source>
        <strain>ATCC 27405 / DSM 1237 / JCM 9322 / NBRC 103400 / NCIMB 10682 / NRRL B-4536 / VPI 7372</strain>
    </source>
</reference>
<name>TRPC_ACET2</name>
<comment type="catalytic activity">
    <reaction evidence="1">
        <text>1-(2-carboxyphenylamino)-1-deoxy-D-ribulose 5-phosphate + H(+) = (1S,2R)-1-C-(indol-3-yl)glycerol 3-phosphate + CO2 + H2O</text>
        <dbReference type="Rhea" id="RHEA:23476"/>
        <dbReference type="ChEBI" id="CHEBI:15377"/>
        <dbReference type="ChEBI" id="CHEBI:15378"/>
        <dbReference type="ChEBI" id="CHEBI:16526"/>
        <dbReference type="ChEBI" id="CHEBI:58613"/>
        <dbReference type="ChEBI" id="CHEBI:58866"/>
        <dbReference type="EC" id="4.1.1.48"/>
    </reaction>
</comment>
<comment type="pathway">
    <text evidence="1">Amino-acid biosynthesis; L-tryptophan biosynthesis; L-tryptophan from chorismate: step 4/5.</text>
</comment>
<comment type="similarity">
    <text evidence="1">Belongs to the TrpC family.</text>
</comment>